<accession>A6TFD9</accession>
<reference key="1">
    <citation type="submission" date="2006-09" db="EMBL/GenBank/DDBJ databases">
        <authorList>
            <consortium name="The Klebsiella pneumonia Genome Sequencing Project"/>
            <person name="McClelland M."/>
            <person name="Sanderson E.K."/>
            <person name="Spieth J."/>
            <person name="Clifton W.S."/>
            <person name="Latreille P."/>
            <person name="Sabo A."/>
            <person name="Pepin K."/>
            <person name="Bhonagiri V."/>
            <person name="Porwollik S."/>
            <person name="Ali J."/>
            <person name="Wilson R.K."/>
        </authorList>
    </citation>
    <scope>NUCLEOTIDE SEQUENCE [LARGE SCALE GENOMIC DNA]</scope>
    <source>
        <strain>ATCC 700721 / MGH 78578</strain>
    </source>
</reference>
<reference key="2">
    <citation type="journal article" date="2014" name="Mol. Microbiol.">
        <title>GIL, a new c-di-GMP-binding protein domain involved in regulation of cellulose synthesis in enterobacteria.</title>
        <authorList>
            <person name="Fang X."/>
            <person name="Ahmad I."/>
            <person name="Blanka A."/>
            <person name="Schottkowski M."/>
            <person name="Cimdins A."/>
            <person name="Galperin M.Y."/>
            <person name="Roemling U."/>
            <person name="Gomelsky M."/>
        </authorList>
    </citation>
    <scope>FUNCTION</scope>
    <scope>C-DI-GMP-BINDING</scope>
    <scope>MUTAGENESIS OF ARG-411 AND ASP-414</scope>
    <source>
        <strain>ATCC 700721</strain>
    </source>
</reference>
<dbReference type="EMBL" id="CP000647">
    <property type="protein sequence ID" value="ABR79273.1"/>
    <property type="status" value="ALT_INIT"/>
    <property type="molecule type" value="Genomic_DNA"/>
</dbReference>
<dbReference type="RefSeq" id="WP_002921516.1">
    <property type="nucleotide sequence ID" value="NC_009648.1"/>
</dbReference>
<dbReference type="SMR" id="A6TFD9"/>
<dbReference type="STRING" id="272620.KPN_03886"/>
<dbReference type="PaxDb" id="272620-KPN_03886"/>
<dbReference type="EnsemblBacteria" id="ABR79273">
    <property type="protein sequence ID" value="ABR79273"/>
    <property type="gene ID" value="KPN_03886"/>
</dbReference>
<dbReference type="KEGG" id="kpn:KPN_03886"/>
<dbReference type="HOGENOM" id="CLU_039389_2_0_6"/>
<dbReference type="Proteomes" id="UP000000265">
    <property type="component" value="Chromosome"/>
</dbReference>
<dbReference type="GO" id="GO:0035438">
    <property type="term" value="F:cyclic-di-GMP binding"/>
    <property type="evidence" value="ECO:0007669"/>
    <property type="project" value="InterPro"/>
</dbReference>
<dbReference type="GO" id="GO:0030244">
    <property type="term" value="P:cellulose biosynthetic process"/>
    <property type="evidence" value="ECO:0007669"/>
    <property type="project" value="UniProtKB-KW"/>
</dbReference>
<dbReference type="InterPro" id="IPR017745">
    <property type="entry name" value="BcsE"/>
</dbReference>
<dbReference type="NCBIfam" id="TIGR03369">
    <property type="entry name" value="cellulose_bcsE"/>
    <property type="match status" value="1"/>
</dbReference>
<dbReference type="Pfam" id="PF10995">
    <property type="entry name" value="CBP_BcsE"/>
    <property type="match status" value="1"/>
</dbReference>
<comment type="function">
    <text evidence="1 2">Required for cellulose biosynthesis (By similarity). Binds bis-(3'-5') cyclic diguanylic acid (c-di-GMP) (PubMed:24942809).</text>
</comment>
<comment type="similarity">
    <text evidence="4">Belongs to the BcsE family.</text>
</comment>
<comment type="sequence caution" evidence="4">
    <conflict type="erroneous initiation">
        <sequence resource="EMBL-CDS" id="ABR79273"/>
    </conflict>
    <text>Truncated N-terminus.</text>
</comment>
<name>BCSE_KLEP7</name>
<sequence length="517" mass="58614">MDNVFTLGISSLWDEVCHMPVGGVWWLNVDRYADAVSLFNQTLAAQAKNSHVAALVMGNKPKDIISLDHTHGPDNIALFTLPNRPQALEEIHRDLVCSLEPGNYLFILLCAENAWQNINNEKLCAWVEKTSRWAQYHRCAFLAINSAQDIDRQLTPLLREYRSLSGLASIRYQGDRHIFDIAWWGSDKGISAQQQLMVQHDDAGWRLAQDAETSVQPRSDEKAILSHVRVLEGAPPLSEYWTLFDTNDEVFNAGRTAQAATILFSITQNTQIEQLGRYIHTLRRQRGTALKIIVREQTPSLRATDERLLLSSGASLVIPSSASLSRCLTLIESVQNQKFSRHIPEDFATLLTWSQPLKLRGYQKWDAFCEAVHNVMTNTLLPPDSKGVMVALRPAPGLRVEQALTLCKPNRMGDIMTIGNNRLVLFLSFCRINDLDTALNHIFPLPTGDIFSNRMVWFEDKQILSEIVIMRGVEPARWNTPLPLSVGKNETINATHDGRHWRRYPEPHRLTTREEQA</sequence>
<gene>
    <name type="primary">bcsE</name>
    <name evidence="4" type="ordered locus">KPN78578_38490</name>
    <name evidence="5" type="ORF">KPN_03886</name>
</gene>
<protein>
    <recommendedName>
        <fullName evidence="3">Cyclic di-GMP binding protein BcsE</fullName>
    </recommendedName>
    <alternativeName>
        <fullName>Cellulose biosynthesis protein BcsE</fullName>
    </alternativeName>
</protein>
<evidence type="ECO:0000250" key="1">
    <source>
        <dbReference type="UniProtKB" id="Q8ZLB5"/>
    </source>
</evidence>
<evidence type="ECO:0000269" key="2">
    <source>
    </source>
</evidence>
<evidence type="ECO:0000303" key="3">
    <source>
    </source>
</evidence>
<evidence type="ECO:0000305" key="4"/>
<evidence type="ECO:0000312" key="5">
    <source>
        <dbReference type="EMBL" id="ABR79273.1"/>
    </source>
</evidence>
<keyword id="KW-0135">Cellulose biosynthesis</keyword>
<keyword id="KW-0547">Nucleotide-binding</keyword>
<organism>
    <name type="scientific">Klebsiella pneumoniae subsp. pneumoniae (strain ATCC 700721 / MGH 78578)</name>
    <dbReference type="NCBI Taxonomy" id="272620"/>
    <lineage>
        <taxon>Bacteria</taxon>
        <taxon>Pseudomonadati</taxon>
        <taxon>Pseudomonadota</taxon>
        <taxon>Gammaproteobacteria</taxon>
        <taxon>Enterobacterales</taxon>
        <taxon>Enterobacteriaceae</taxon>
        <taxon>Klebsiella/Raoultella group</taxon>
        <taxon>Klebsiella</taxon>
        <taxon>Klebsiella pneumoniae complex</taxon>
    </lineage>
</organism>
<proteinExistence type="evidence at protein level"/>
<feature type="chain" id="PRO_0000441758" description="Cyclic di-GMP binding protein BcsE">
    <location>
        <begin position="1"/>
        <end position="517"/>
    </location>
</feature>
<feature type="mutagenesis site" description="No longer binds c-di-GMP." evidence="2">
    <original>R</original>
    <variation>D</variation>
    <location>
        <position position="411"/>
    </location>
</feature>
<feature type="mutagenesis site" description="No longer binds c-di-GMP." evidence="2">
    <original>D</original>
    <variation>R</variation>
    <location>
        <position position="414"/>
    </location>
</feature>